<protein>
    <recommendedName>
        <fullName>Putative uncharacterized protein DDB_G0285945</fullName>
    </recommendedName>
</protein>
<feature type="chain" id="PRO_0000348490" description="Putative uncharacterized protein DDB_G0285945">
    <location>
        <begin position="1"/>
        <end position="41"/>
    </location>
</feature>
<evidence type="ECO:0000305" key="1"/>
<dbReference type="EMBL" id="AAFI02000082">
    <property type="protein sequence ID" value="EAL64507.1"/>
    <property type="status" value="ALT_SEQ"/>
    <property type="molecule type" value="Genomic_DNA"/>
</dbReference>
<dbReference type="RefSeq" id="XP_637978.1">
    <property type="nucleotide sequence ID" value="XM_632886.1"/>
</dbReference>
<dbReference type="PaxDb" id="44689-DDB0215855"/>
<dbReference type="EnsemblProtists" id="EAL64507">
    <property type="protein sequence ID" value="EAL64507"/>
    <property type="gene ID" value="DDB_G0285945"/>
</dbReference>
<dbReference type="GeneID" id="8625330"/>
<dbReference type="KEGG" id="ddi:DDB_G0285945"/>
<dbReference type="dictyBase" id="DDB_G0285945"/>
<dbReference type="InParanoid" id="Q54ML2"/>
<dbReference type="PRO" id="PR:Q54ML2"/>
<dbReference type="Proteomes" id="UP000002195">
    <property type="component" value="Chromosome 4"/>
</dbReference>
<keyword id="KW-1185">Reference proteome</keyword>
<sequence>MIMITIKLGRDYTQDLINKCGRGGVGGGGLNGIFLSYEGVV</sequence>
<comment type="sequence caution" evidence="1">
    <conflict type="erroneous gene model prediction">
        <sequence resource="EMBL-CDS" id="EAL64507"/>
    </conflict>
</comment>
<proteinExistence type="predicted"/>
<gene>
    <name type="ORF">DDB_G0285945</name>
</gene>
<accession>Q54ML2</accession>
<organism>
    <name type="scientific">Dictyostelium discoideum</name>
    <name type="common">Social amoeba</name>
    <dbReference type="NCBI Taxonomy" id="44689"/>
    <lineage>
        <taxon>Eukaryota</taxon>
        <taxon>Amoebozoa</taxon>
        <taxon>Evosea</taxon>
        <taxon>Eumycetozoa</taxon>
        <taxon>Dictyostelia</taxon>
        <taxon>Dictyosteliales</taxon>
        <taxon>Dictyosteliaceae</taxon>
        <taxon>Dictyostelium</taxon>
    </lineage>
</organism>
<name>Y5855_DICDI</name>
<reference key="1">
    <citation type="journal article" date="2005" name="Nature">
        <title>The genome of the social amoeba Dictyostelium discoideum.</title>
        <authorList>
            <person name="Eichinger L."/>
            <person name="Pachebat J.A."/>
            <person name="Gloeckner G."/>
            <person name="Rajandream M.A."/>
            <person name="Sucgang R."/>
            <person name="Berriman M."/>
            <person name="Song J."/>
            <person name="Olsen R."/>
            <person name="Szafranski K."/>
            <person name="Xu Q."/>
            <person name="Tunggal B."/>
            <person name="Kummerfeld S."/>
            <person name="Madera M."/>
            <person name="Konfortov B.A."/>
            <person name="Rivero F."/>
            <person name="Bankier A.T."/>
            <person name="Lehmann R."/>
            <person name="Hamlin N."/>
            <person name="Davies R."/>
            <person name="Gaudet P."/>
            <person name="Fey P."/>
            <person name="Pilcher K."/>
            <person name="Chen G."/>
            <person name="Saunders D."/>
            <person name="Sodergren E.J."/>
            <person name="Davis P."/>
            <person name="Kerhornou A."/>
            <person name="Nie X."/>
            <person name="Hall N."/>
            <person name="Anjard C."/>
            <person name="Hemphill L."/>
            <person name="Bason N."/>
            <person name="Farbrother P."/>
            <person name="Desany B."/>
            <person name="Just E."/>
            <person name="Morio T."/>
            <person name="Rost R."/>
            <person name="Churcher C.M."/>
            <person name="Cooper J."/>
            <person name="Haydock S."/>
            <person name="van Driessche N."/>
            <person name="Cronin A."/>
            <person name="Goodhead I."/>
            <person name="Muzny D.M."/>
            <person name="Mourier T."/>
            <person name="Pain A."/>
            <person name="Lu M."/>
            <person name="Harper D."/>
            <person name="Lindsay R."/>
            <person name="Hauser H."/>
            <person name="James K.D."/>
            <person name="Quiles M."/>
            <person name="Madan Babu M."/>
            <person name="Saito T."/>
            <person name="Buchrieser C."/>
            <person name="Wardroper A."/>
            <person name="Felder M."/>
            <person name="Thangavelu M."/>
            <person name="Johnson D."/>
            <person name="Knights A."/>
            <person name="Loulseged H."/>
            <person name="Mungall K.L."/>
            <person name="Oliver K."/>
            <person name="Price C."/>
            <person name="Quail M.A."/>
            <person name="Urushihara H."/>
            <person name="Hernandez J."/>
            <person name="Rabbinowitsch E."/>
            <person name="Steffen D."/>
            <person name="Sanders M."/>
            <person name="Ma J."/>
            <person name="Kohara Y."/>
            <person name="Sharp S."/>
            <person name="Simmonds M.N."/>
            <person name="Spiegler S."/>
            <person name="Tivey A."/>
            <person name="Sugano S."/>
            <person name="White B."/>
            <person name="Walker D."/>
            <person name="Woodward J.R."/>
            <person name="Winckler T."/>
            <person name="Tanaka Y."/>
            <person name="Shaulsky G."/>
            <person name="Schleicher M."/>
            <person name="Weinstock G.M."/>
            <person name="Rosenthal A."/>
            <person name="Cox E.C."/>
            <person name="Chisholm R.L."/>
            <person name="Gibbs R.A."/>
            <person name="Loomis W.F."/>
            <person name="Platzer M."/>
            <person name="Kay R.R."/>
            <person name="Williams J.G."/>
            <person name="Dear P.H."/>
            <person name="Noegel A.A."/>
            <person name="Barrell B.G."/>
            <person name="Kuspa A."/>
        </authorList>
    </citation>
    <scope>NUCLEOTIDE SEQUENCE [LARGE SCALE GENOMIC DNA]</scope>
    <source>
        <strain>AX4</strain>
    </source>
</reference>